<protein>
    <recommendedName>
        <fullName evidence="1">4-hydroxy-3-methylbut-2-en-1-yl diphosphate synthase (flavodoxin)</fullName>
        <ecNumber evidence="1">1.17.7.3</ecNumber>
    </recommendedName>
    <alternativeName>
        <fullName evidence="1">1-hydroxy-2-methyl-2-(E)-butenyl 4-diphosphate synthase</fullName>
    </alternativeName>
</protein>
<organism>
    <name type="scientific">Chlamydia abortus (strain DSM 27085 / S26/3)</name>
    <name type="common">Chlamydophila abortus</name>
    <dbReference type="NCBI Taxonomy" id="218497"/>
    <lineage>
        <taxon>Bacteria</taxon>
        <taxon>Pseudomonadati</taxon>
        <taxon>Chlamydiota</taxon>
        <taxon>Chlamydiia</taxon>
        <taxon>Chlamydiales</taxon>
        <taxon>Chlamydiaceae</taxon>
        <taxon>Chlamydia/Chlamydophila group</taxon>
        <taxon>Chlamydia</taxon>
    </lineage>
</organism>
<sequence>MIHPPAQKQAARRYTHSVKIGNLYVGSDHSIKTQSMTTTPTADVDATVAQICALVEARCEIARVTVQGIKEAQACEHIKERLIALGIDVPLVADIHFFPQAAMHVADFVDKVRINPGNFVDKRNMFTGKIYTDKHYADSLLRLEEKFSPLVEKCKRLGKAMRIGVNHGSLSERVMQRYGDTIEGMVVSALEYIEVCEKLGYRDVVFSMKSSNPKVMVAAYRQLAKDLDARGWHYPLHLGVTEAGMGMDGIIKSSVGIGTLLTEGLGDTIRCSLTGCPTQEIPVCESLLKHTTTYLNLPRKNNPFALENSESFVNASKKITKTTPWGSVYGVFIKLNEDHMLNTPVEQLLEQLGIHPENGKKDFTTPDGVVVPKSFIGTSVLKKLEQHFIVFHHHEVPCLYDYNHEIWNQEEVLSSPFVHFHASPPFIHSTRDFFEKKQGEQQPVKLVFSKDLDDECEAAVAIATEFGALLLDGLGEAVILDLPNIPLSTVREIAFGTLQSAGVRLVKTEYISCPGCGRTLFDLPEVTKRIHERTQHLVGLKIAVMGCIVNGPGEMADADFGFVGSKTGMVDLYVKHTCVKAHIPMEQAEDELVLLLKEHGVWKDPE</sequence>
<accession>Q5L669</accession>
<reference key="1">
    <citation type="journal article" date="2005" name="Genome Res.">
        <title>The Chlamydophila abortus genome sequence reveals an array of variable proteins that contribute to interspecies variation.</title>
        <authorList>
            <person name="Thomson N.R."/>
            <person name="Yeats C."/>
            <person name="Bell K."/>
            <person name="Holden M.T.G."/>
            <person name="Bentley S.D."/>
            <person name="Livingstone M."/>
            <person name="Cerdeno-Tarraga A.-M."/>
            <person name="Harris B."/>
            <person name="Doggett J."/>
            <person name="Ormond D."/>
            <person name="Mungall K."/>
            <person name="Clarke K."/>
            <person name="Feltwell T."/>
            <person name="Hance Z."/>
            <person name="Sanders M."/>
            <person name="Quail M.A."/>
            <person name="Price C."/>
            <person name="Barrell B.G."/>
            <person name="Parkhill J."/>
            <person name="Longbottom D."/>
        </authorList>
    </citation>
    <scope>NUCLEOTIDE SEQUENCE [LARGE SCALE GENOMIC DNA]</scope>
    <source>
        <strain>DSM 27085 / S26/3</strain>
    </source>
</reference>
<feature type="chain" id="PRO_0000190556" description="4-hydroxy-3-methylbut-2-en-1-yl diphosphate synthase (flavodoxin)">
    <location>
        <begin position="1"/>
        <end position="606"/>
    </location>
</feature>
<feature type="binding site" evidence="1">
    <location>
        <position position="513"/>
    </location>
    <ligand>
        <name>[4Fe-4S] cluster</name>
        <dbReference type="ChEBI" id="CHEBI:49883"/>
    </ligand>
</feature>
<feature type="binding site" evidence="1">
    <location>
        <position position="516"/>
    </location>
    <ligand>
        <name>[4Fe-4S] cluster</name>
        <dbReference type="ChEBI" id="CHEBI:49883"/>
    </ligand>
</feature>
<feature type="binding site" evidence="1">
    <location>
        <position position="547"/>
    </location>
    <ligand>
        <name>[4Fe-4S] cluster</name>
        <dbReference type="ChEBI" id="CHEBI:49883"/>
    </ligand>
</feature>
<feature type="binding site" evidence="1">
    <location>
        <position position="554"/>
    </location>
    <ligand>
        <name>[4Fe-4S] cluster</name>
        <dbReference type="ChEBI" id="CHEBI:49883"/>
    </ligand>
</feature>
<name>ISPG_CHLAB</name>
<dbReference type="EC" id="1.17.7.3" evidence="1"/>
<dbReference type="EMBL" id="CR848038">
    <property type="protein sequence ID" value="CAH63862.1"/>
    <property type="molecule type" value="Genomic_DNA"/>
</dbReference>
<dbReference type="RefSeq" id="WP_011097048.1">
    <property type="nucleotide sequence ID" value="NC_004552.2"/>
</dbReference>
<dbReference type="SMR" id="Q5L669"/>
<dbReference type="KEGG" id="cab:CAB409"/>
<dbReference type="eggNOG" id="COG0821">
    <property type="taxonomic scope" value="Bacteria"/>
</dbReference>
<dbReference type="HOGENOM" id="CLU_012689_0_0_0"/>
<dbReference type="OrthoDB" id="9803214at2"/>
<dbReference type="UniPathway" id="UPA00056">
    <property type="reaction ID" value="UER00096"/>
</dbReference>
<dbReference type="Proteomes" id="UP000001012">
    <property type="component" value="Chromosome"/>
</dbReference>
<dbReference type="GO" id="GO:0051539">
    <property type="term" value="F:4 iron, 4 sulfur cluster binding"/>
    <property type="evidence" value="ECO:0007669"/>
    <property type="project" value="UniProtKB-UniRule"/>
</dbReference>
<dbReference type="GO" id="GO:0046429">
    <property type="term" value="F:4-hydroxy-3-methylbut-2-en-1-yl diphosphate synthase activity (ferredoxin)"/>
    <property type="evidence" value="ECO:0007669"/>
    <property type="project" value="UniProtKB-UniRule"/>
</dbReference>
<dbReference type="GO" id="GO:0141197">
    <property type="term" value="F:4-hydroxy-3-methylbut-2-enyl-diphosphate synthase activity (flavodoxin)"/>
    <property type="evidence" value="ECO:0007669"/>
    <property type="project" value="UniProtKB-EC"/>
</dbReference>
<dbReference type="GO" id="GO:0005506">
    <property type="term" value="F:iron ion binding"/>
    <property type="evidence" value="ECO:0007669"/>
    <property type="project" value="InterPro"/>
</dbReference>
<dbReference type="GO" id="GO:0019288">
    <property type="term" value="P:isopentenyl diphosphate biosynthetic process, methylerythritol 4-phosphate pathway"/>
    <property type="evidence" value="ECO:0007669"/>
    <property type="project" value="UniProtKB-UniRule"/>
</dbReference>
<dbReference type="GO" id="GO:0016114">
    <property type="term" value="P:terpenoid biosynthetic process"/>
    <property type="evidence" value="ECO:0007669"/>
    <property type="project" value="InterPro"/>
</dbReference>
<dbReference type="FunFam" id="3.20.20.20:FF:000005">
    <property type="entry name" value="4-hydroxy-3-methylbut-2-en-1-yl diphosphate synthase (flavodoxin)"/>
    <property type="match status" value="1"/>
</dbReference>
<dbReference type="FunFam" id="3.30.413.10:FF:000006">
    <property type="entry name" value="4-hydroxy-3-methylbut-2-en-1-yl diphosphate synthase (flavodoxin)"/>
    <property type="match status" value="1"/>
</dbReference>
<dbReference type="Gene3D" id="3.20.20.20">
    <property type="entry name" value="Dihydropteroate synthase-like"/>
    <property type="match status" value="1"/>
</dbReference>
<dbReference type="Gene3D" id="3.30.413.10">
    <property type="entry name" value="Sulfite Reductase Hemoprotein, domain 1"/>
    <property type="match status" value="1"/>
</dbReference>
<dbReference type="HAMAP" id="MF_00159">
    <property type="entry name" value="IspG"/>
    <property type="match status" value="1"/>
</dbReference>
<dbReference type="InterPro" id="IPR011005">
    <property type="entry name" value="Dihydropteroate_synth-like_sf"/>
</dbReference>
<dbReference type="InterPro" id="IPR017178">
    <property type="entry name" value="IspG_atypical"/>
</dbReference>
<dbReference type="InterPro" id="IPR004588">
    <property type="entry name" value="IspG_bac-typ"/>
</dbReference>
<dbReference type="InterPro" id="IPR045854">
    <property type="entry name" value="NO2/SO3_Rdtase_4Fe4S_sf"/>
</dbReference>
<dbReference type="NCBIfam" id="TIGR00612">
    <property type="entry name" value="ispG_gcpE"/>
    <property type="match status" value="1"/>
</dbReference>
<dbReference type="NCBIfam" id="NF001912">
    <property type="entry name" value="PRK00694.1"/>
    <property type="match status" value="1"/>
</dbReference>
<dbReference type="PANTHER" id="PTHR30454">
    <property type="entry name" value="4-HYDROXY-3-METHYLBUT-2-EN-1-YL DIPHOSPHATE SYNTHASE"/>
    <property type="match status" value="1"/>
</dbReference>
<dbReference type="PANTHER" id="PTHR30454:SF0">
    <property type="entry name" value="4-HYDROXY-3-METHYLBUT-2-EN-1-YL DIPHOSPHATE SYNTHASE (FERREDOXIN), CHLOROPLASTIC"/>
    <property type="match status" value="1"/>
</dbReference>
<dbReference type="Pfam" id="PF04551">
    <property type="entry name" value="GcpE"/>
    <property type="match status" value="2"/>
</dbReference>
<dbReference type="PIRSF" id="PIRSF037336">
    <property type="entry name" value="IspG_like"/>
    <property type="match status" value="1"/>
</dbReference>
<dbReference type="SUPFAM" id="SSF56014">
    <property type="entry name" value="Nitrite and sulphite reductase 4Fe-4S domain-like"/>
    <property type="match status" value="1"/>
</dbReference>
<proteinExistence type="inferred from homology"/>
<evidence type="ECO:0000255" key="1">
    <source>
        <dbReference type="HAMAP-Rule" id="MF_00159"/>
    </source>
</evidence>
<keyword id="KW-0004">4Fe-4S</keyword>
<keyword id="KW-0408">Iron</keyword>
<keyword id="KW-0411">Iron-sulfur</keyword>
<keyword id="KW-0414">Isoprene biosynthesis</keyword>
<keyword id="KW-0479">Metal-binding</keyword>
<keyword id="KW-0560">Oxidoreductase</keyword>
<gene>
    <name evidence="1" type="primary">ispG</name>
    <name type="ordered locus">CAB409</name>
</gene>
<comment type="function">
    <text evidence="1">Converts 2C-methyl-D-erythritol 2,4-cyclodiphosphate (ME-2,4cPP) into 1-hydroxy-2-methyl-2-(E)-butenyl 4-diphosphate.</text>
</comment>
<comment type="catalytic activity">
    <reaction evidence="1">
        <text>(2E)-4-hydroxy-3-methylbut-2-enyl diphosphate + oxidized [flavodoxin] + H2O + 2 H(+) = 2-C-methyl-D-erythritol 2,4-cyclic diphosphate + reduced [flavodoxin]</text>
        <dbReference type="Rhea" id="RHEA:43604"/>
        <dbReference type="Rhea" id="RHEA-COMP:10622"/>
        <dbReference type="Rhea" id="RHEA-COMP:10623"/>
        <dbReference type="ChEBI" id="CHEBI:15377"/>
        <dbReference type="ChEBI" id="CHEBI:15378"/>
        <dbReference type="ChEBI" id="CHEBI:57618"/>
        <dbReference type="ChEBI" id="CHEBI:58210"/>
        <dbReference type="ChEBI" id="CHEBI:58483"/>
        <dbReference type="ChEBI" id="CHEBI:128753"/>
        <dbReference type="EC" id="1.17.7.3"/>
    </reaction>
</comment>
<comment type="cofactor">
    <cofactor evidence="1">
        <name>[4Fe-4S] cluster</name>
        <dbReference type="ChEBI" id="CHEBI:49883"/>
    </cofactor>
    <text evidence="1">Binds 1 [4Fe-4S] cluster.</text>
</comment>
<comment type="pathway">
    <text evidence="1">Isoprenoid biosynthesis; isopentenyl diphosphate biosynthesis via DXP pathway; isopentenyl diphosphate from 1-deoxy-D-xylulose 5-phosphate: step 5/6.</text>
</comment>
<comment type="similarity">
    <text evidence="1">Belongs to the IspG family.</text>
</comment>